<feature type="transit peptide" description="Mitochondrion" evidence="5">
    <location>
        <begin position="1"/>
        <end status="unknown"/>
    </location>
</feature>
<feature type="chain" id="PRO_0000234102" description="Propionyl-CoA carboxylase alpha chain, mitochondrial">
    <location>
        <begin status="unknown"/>
        <end position="724"/>
    </location>
</feature>
<feature type="domain" description="Biotin carboxylation" evidence="7">
    <location>
        <begin position="48"/>
        <end position="495"/>
    </location>
</feature>
<feature type="domain" description="ATP-grasp" evidence="6">
    <location>
        <begin position="167"/>
        <end position="364"/>
    </location>
</feature>
<feature type="domain" description="Biotinyl-binding" evidence="8">
    <location>
        <begin position="649"/>
        <end position="724"/>
    </location>
</feature>
<feature type="active site" evidence="1">
    <location>
        <position position="339"/>
    </location>
</feature>
<feature type="binding site" evidence="2">
    <location>
        <position position="163"/>
    </location>
    <ligand>
        <name>ATP</name>
        <dbReference type="ChEBI" id="CHEBI:30616"/>
    </ligand>
</feature>
<feature type="binding site" evidence="6">
    <location>
        <begin position="195"/>
        <end position="256"/>
    </location>
    <ligand>
        <name>ATP</name>
        <dbReference type="ChEBI" id="CHEBI:30616"/>
    </ligand>
</feature>
<feature type="binding site" evidence="2">
    <location>
        <position position="247"/>
    </location>
    <ligand>
        <name>ATP</name>
        <dbReference type="ChEBI" id="CHEBI:30616"/>
    </ligand>
</feature>
<feature type="binding site" evidence="2">
    <location>
        <position position="282"/>
    </location>
    <ligand>
        <name>ATP</name>
        <dbReference type="ChEBI" id="CHEBI:30616"/>
    </ligand>
</feature>
<feature type="binding site" evidence="6 7">
    <location>
        <position position="322"/>
    </location>
    <ligand>
        <name>Mg(2+)</name>
        <dbReference type="ChEBI" id="CHEBI:18420"/>
        <label>1</label>
    </ligand>
</feature>
<feature type="binding site" evidence="6 7">
    <location>
        <position position="322"/>
    </location>
    <ligand>
        <name>Mn(2+)</name>
        <dbReference type="ChEBI" id="CHEBI:29035"/>
        <label>1</label>
    </ligand>
</feature>
<feature type="binding site" evidence="6 7">
    <location>
        <position position="335"/>
    </location>
    <ligand>
        <name>Mg(2+)</name>
        <dbReference type="ChEBI" id="CHEBI:18420"/>
        <label>1</label>
    </ligand>
</feature>
<feature type="binding site" evidence="6 7">
    <location>
        <position position="335"/>
    </location>
    <ligand>
        <name>Mg(2+)</name>
        <dbReference type="ChEBI" id="CHEBI:18420"/>
        <label>2</label>
    </ligand>
</feature>
<feature type="binding site" evidence="6 7">
    <location>
        <position position="335"/>
    </location>
    <ligand>
        <name>Mn(2+)</name>
        <dbReference type="ChEBI" id="CHEBI:29035"/>
        <label>1</label>
    </ligand>
</feature>
<feature type="binding site" evidence="6 7">
    <location>
        <position position="335"/>
    </location>
    <ligand>
        <name>Mn(2+)</name>
        <dbReference type="ChEBI" id="CHEBI:29035"/>
        <label>2</label>
    </ligand>
</feature>
<feature type="binding site" evidence="6 7">
    <location>
        <position position="337"/>
    </location>
    <ligand>
        <name>Mg(2+)</name>
        <dbReference type="ChEBI" id="CHEBI:18420"/>
        <label>2</label>
    </ligand>
</feature>
<feature type="binding site" evidence="6 7">
    <location>
        <position position="337"/>
    </location>
    <ligand>
        <name>Mn(2+)</name>
        <dbReference type="ChEBI" id="CHEBI:29035"/>
        <label>2</label>
    </ligand>
</feature>
<feature type="binding site" evidence="4">
    <location>
        <position position="395"/>
    </location>
    <ligand>
        <name>biotin</name>
        <dbReference type="ChEBI" id="CHEBI:57586"/>
    </ligand>
</feature>
<feature type="modified residue" description="N6-biotinyllysine" evidence="2 8">
    <location>
        <position position="690"/>
    </location>
</feature>
<sequence>MLRAASSIRAVANRGLATAAVARPGVPLDEREGKEIYTTVGIDYNEPKFDKILIANRGEIACRVIKTARAMGIKTVAVHSDVDSNSLHVKMADEAVCVGEAPTAKSYLRADRILQAVEDTGAQAVHPGYGFLSENTKFAAELEKAGAKFIGPNSKAILDMGDKIHSKKIATAARVSMIPGYDGEIADEDMCVKVSRDIGYPVMIKASAGGGGKGMRVAWNDKQAREGYRLSKQEAASSFGDDRMLVEKFIDNPRHIEMQVLCDKHGNALWLNERECSIQRRNQKVIEEAPSSFVPPEMRRKMGEQAVQLAKAVGYDSAGTVEFLVDSQRNFYFLEMNTRLQVEHPITECITGIDIVQQMLRVSYGHPLPITQEQVPLNGWAFESRVYAEDPYKGFGLPSVGRLSRYVEPKHVDGVRCDSGIREGSEISIYYDPLICKLVTHGDNREQALNRMQEALDNYVIRGVTHNIPLLRDIVQEKRFRTGDITTKYLPEVYPEGFQGTSLSPKEQDVVIAFASALNARKLARANQFLNQNKQRSTHVASFSKTYKFVSSLPVKEGERPTEHAVEVEFVEGSANKAQVRIGGKTVTISGDLNLSHPVNSIEVDGEHITTQIVGKRAGEITVLYKGTPFKVKVLPEQAVKYLQYMKEKAKVDLSTVVLSPMPGAIKNVNVKPGDMVSEGQELVVMEAMKMQNSLHAGKTGRVKAVNVKVGATVDEGEVLVELE</sequence>
<gene>
    <name type="primary">pcca-1</name>
    <name type="ORF">F27D9.5</name>
</gene>
<accession>Q19842</accession>
<dbReference type="EC" id="6.4.1.3" evidence="2"/>
<dbReference type="EMBL" id="FO080935">
    <property type="protein sequence ID" value="CCD67920.1"/>
    <property type="molecule type" value="Genomic_DNA"/>
</dbReference>
<dbReference type="PIR" id="T16187">
    <property type="entry name" value="T16187"/>
</dbReference>
<dbReference type="RefSeq" id="NP_509293.1">
    <property type="nucleotide sequence ID" value="NM_076892.8"/>
</dbReference>
<dbReference type="SMR" id="Q19842"/>
<dbReference type="BioGRID" id="45950">
    <property type="interactions" value="23"/>
</dbReference>
<dbReference type="FunCoup" id="Q19842">
    <property type="interactions" value="1422"/>
</dbReference>
<dbReference type="STRING" id="6239.F27D9.5.2"/>
<dbReference type="PaxDb" id="6239-F27D9.5"/>
<dbReference type="PeptideAtlas" id="Q19842"/>
<dbReference type="EnsemblMetazoa" id="F27D9.5.1">
    <property type="protein sequence ID" value="F27D9.5.1"/>
    <property type="gene ID" value="WBGene00017864"/>
</dbReference>
<dbReference type="GeneID" id="181026"/>
<dbReference type="KEGG" id="cel:CELE_F27D9.5"/>
<dbReference type="UCSC" id="F27D9.5">
    <property type="organism name" value="c. elegans"/>
</dbReference>
<dbReference type="AGR" id="WB:WBGene00017864"/>
<dbReference type="CTD" id="181026"/>
<dbReference type="WormBase" id="F27D9.5">
    <property type="protein sequence ID" value="CE04451"/>
    <property type="gene ID" value="WBGene00017864"/>
    <property type="gene designation" value="pcca-1"/>
</dbReference>
<dbReference type="eggNOG" id="KOG0238">
    <property type="taxonomic scope" value="Eukaryota"/>
</dbReference>
<dbReference type="GeneTree" id="ENSGT00940000156083"/>
<dbReference type="HOGENOM" id="CLU_000395_3_3_1"/>
<dbReference type="InParanoid" id="Q19842"/>
<dbReference type="OMA" id="IGPKHYS"/>
<dbReference type="OrthoDB" id="196847at2759"/>
<dbReference type="PhylomeDB" id="Q19842"/>
<dbReference type="BRENDA" id="6.4.1.3">
    <property type="organism ID" value="1045"/>
</dbReference>
<dbReference type="Reactome" id="R-CEL-196780">
    <property type="pathway name" value="Biotin transport and metabolism"/>
</dbReference>
<dbReference type="Reactome" id="R-CEL-71032">
    <property type="pathway name" value="Propionyl-CoA catabolism"/>
</dbReference>
<dbReference type="UniPathway" id="UPA00945">
    <property type="reaction ID" value="UER00908"/>
</dbReference>
<dbReference type="PRO" id="PR:Q19842"/>
<dbReference type="Proteomes" id="UP000001940">
    <property type="component" value="Chromosome X"/>
</dbReference>
<dbReference type="Bgee" id="WBGene00017864">
    <property type="expression patterns" value="Expressed in embryo and 4 other cell types or tissues"/>
</dbReference>
<dbReference type="GO" id="GO:0005759">
    <property type="term" value="C:mitochondrial matrix"/>
    <property type="evidence" value="ECO:0000250"/>
    <property type="project" value="UniProtKB"/>
</dbReference>
<dbReference type="GO" id="GO:0005739">
    <property type="term" value="C:mitochondrion"/>
    <property type="evidence" value="ECO:0007005"/>
    <property type="project" value="WormBase"/>
</dbReference>
<dbReference type="GO" id="GO:0005524">
    <property type="term" value="F:ATP binding"/>
    <property type="evidence" value="ECO:0007669"/>
    <property type="project" value="UniProtKB-KW"/>
</dbReference>
<dbReference type="GO" id="GO:0046872">
    <property type="term" value="F:metal ion binding"/>
    <property type="evidence" value="ECO:0007669"/>
    <property type="project" value="UniProtKB-KW"/>
</dbReference>
<dbReference type="GO" id="GO:0004658">
    <property type="term" value="F:propionyl-CoA carboxylase activity"/>
    <property type="evidence" value="ECO:0000250"/>
    <property type="project" value="UniProtKB"/>
</dbReference>
<dbReference type="GO" id="GO:0016042">
    <property type="term" value="P:lipid catabolic process"/>
    <property type="evidence" value="ECO:0007669"/>
    <property type="project" value="UniProtKB-KW"/>
</dbReference>
<dbReference type="CDD" id="cd06850">
    <property type="entry name" value="biotinyl_domain"/>
    <property type="match status" value="1"/>
</dbReference>
<dbReference type="FunFam" id="2.40.50.100:FF:000003">
    <property type="entry name" value="Acetyl-CoA carboxylase biotin carboxyl carrier protein"/>
    <property type="match status" value="1"/>
</dbReference>
<dbReference type="FunFam" id="3.30.1490.20:FF:000003">
    <property type="entry name" value="acetyl-CoA carboxylase isoform X1"/>
    <property type="match status" value="1"/>
</dbReference>
<dbReference type="FunFam" id="3.30.470.20:FF:000028">
    <property type="entry name" value="Methylcrotonoyl-CoA carboxylase subunit alpha, mitochondrial"/>
    <property type="match status" value="1"/>
</dbReference>
<dbReference type="FunFam" id="3.40.50.20:FF:000010">
    <property type="entry name" value="Propionyl-CoA carboxylase subunit alpha"/>
    <property type="match status" value="1"/>
</dbReference>
<dbReference type="Gene3D" id="2.40.50.100">
    <property type="match status" value="1"/>
</dbReference>
<dbReference type="Gene3D" id="3.30.700.30">
    <property type="match status" value="1"/>
</dbReference>
<dbReference type="Gene3D" id="3.40.50.20">
    <property type="match status" value="1"/>
</dbReference>
<dbReference type="Gene3D" id="3.30.1490.20">
    <property type="entry name" value="ATP-grasp fold, A domain"/>
    <property type="match status" value="1"/>
</dbReference>
<dbReference type="Gene3D" id="3.30.470.20">
    <property type="entry name" value="ATP-grasp fold, B domain"/>
    <property type="match status" value="1"/>
</dbReference>
<dbReference type="InterPro" id="IPR011761">
    <property type="entry name" value="ATP-grasp"/>
</dbReference>
<dbReference type="InterPro" id="IPR013815">
    <property type="entry name" value="ATP_grasp_subdomain_1"/>
</dbReference>
<dbReference type="InterPro" id="IPR005481">
    <property type="entry name" value="BC-like_N"/>
</dbReference>
<dbReference type="InterPro" id="IPR001882">
    <property type="entry name" value="Biotin_BS"/>
</dbReference>
<dbReference type="InterPro" id="IPR050856">
    <property type="entry name" value="Biotin_carboxylase_complex"/>
</dbReference>
<dbReference type="InterPro" id="IPR011764">
    <property type="entry name" value="Biotin_carboxylation_dom"/>
</dbReference>
<dbReference type="InterPro" id="IPR005482">
    <property type="entry name" value="Biotin_COase_C"/>
</dbReference>
<dbReference type="InterPro" id="IPR000089">
    <property type="entry name" value="Biotin_lipoyl"/>
</dbReference>
<dbReference type="InterPro" id="IPR005479">
    <property type="entry name" value="CbamoylP_synth_lsu-like_ATP-bd"/>
</dbReference>
<dbReference type="InterPro" id="IPR041265">
    <property type="entry name" value="PCC_BT"/>
</dbReference>
<dbReference type="InterPro" id="IPR016185">
    <property type="entry name" value="PreATP-grasp_dom_sf"/>
</dbReference>
<dbReference type="InterPro" id="IPR011054">
    <property type="entry name" value="Rudment_hybrid_motif"/>
</dbReference>
<dbReference type="InterPro" id="IPR011053">
    <property type="entry name" value="Single_hybrid_motif"/>
</dbReference>
<dbReference type="NCBIfam" id="NF006367">
    <property type="entry name" value="PRK08591.1"/>
    <property type="match status" value="1"/>
</dbReference>
<dbReference type="PANTHER" id="PTHR18866">
    <property type="entry name" value="CARBOXYLASE:PYRUVATE/ACETYL-COA/PROPIONYL-COA CARBOXYLASE"/>
    <property type="match status" value="1"/>
</dbReference>
<dbReference type="PANTHER" id="PTHR18866:SF33">
    <property type="entry name" value="METHYLCROTONOYL-COA CARBOXYLASE SUBUNIT ALPHA, MITOCHONDRIAL-RELATED"/>
    <property type="match status" value="1"/>
</dbReference>
<dbReference type="Pfam" id="PF02785">
    <property type="entry name" value="Biotin_carb_C"/>
    <property type="match status" value="1"/>
</dbReference>
<dbReference type="Pfam" id="PF00289">
    <property type="entry name" value="Biotin_carb_N"/>
    <property type="match status" value="1"/>
</dbReference>
<dbReference type="Pfam" id="PF00364">
    <property type="entry name" value="Biotin_lipoyl"/>
    <property type="match status" value="1"/>
</dbReference>
<dbReference type="Pfam" id="PF02786">
    <property type="entry name" value="CPSase_L_D2"/>
    <property type="match status" value="1"/>
</dbReference>
<dbReference type="Pfam" id="PF18140">
    <property type="entry name" value="PCC_BT"/>
    <property type="match status" value="1"/>
</dbReference>
<dbReference type="SMART" id="SM00878">
    <property type="entry name" value="Biotin_carb_C"/>
    <property type="match status" value="1"/>
</dbReference>
<dbReference type="SUPFAM" id="SSF56059">
    <property type="entry name" value="Glutathione synthetase ATP-binding domain-like"/>
    <property type="match status" value="1"/>
</dbReference>
<dbReference type="SUPFAM" id="SSF52440">
    <property type="entry name" value="PreATP-grasp domain"/>
    <property type="match status" value="1"/>
</dbReference>
<dbReference type="SUPFAM" id="SSF51246">
    <property type="entry name" value="Rudiment single hybrid motif"/>
    <property type="match status" value="1"/>
</dbReference>
<dbReference type="SUPFAM" id="SSF51230">
    <property type="entry name" value="Single hybrid motif"/>
    <property type="match status" value="1"/>
</dbReference>
<dbReference type="PROSITE" id="PS50975">
    <property type="entry name" value="ATP_GRASP"/>
    <property type="match status" value="1"/>
</dbReference>
<dbReference type="PROSITE" id="PS50979">
    <property type="entry name" value="BC"/>
    <property type="match status" value="1"/>
</dbReference>
<dbReference type="PROSITE" id="PS00188">
    <property type="entry name" value="BIOTIN"/>
    <property type="match status" value="1"/>
</dbReference>
<dbReference type="PROSITE" id="PS50968">
    <property type="entry name" value="BIOTINYL_LIPOYL"/>
    <property type="match status" value="1"/>
</dbReference>
<dbReference type="PROSITE" id="PS00866">
    <property type="entry name" value="CPSASE_1"/>
    <property type="match status" value="1"/>
</dbReference>
<dbReference type="PROSITE" id="PS00867">
    <property type="entry name" value="CPSASE_2"/>
    <property type="match status" value="1"/>
</dbReference>
<reference key="1">
    <citation type="journal article" date="1998" name="Science">
        <title>Genome sequence of the nematode C. elegans: a platform for investigating biology.</title>
        <authorList>
            <consortium name="The C. elegans sequencing consortium"/>
        </authorList>
    </citation>
    <scope>NUCLEOTIDE SEQUENCE [LARGE SCALE GENOMIC DNA]</scope>
    <source>
        <strain>Bristol N2</strain>
    </source>
</reference>
<reference key="2">
    <citation type="submission" date="2006-03" db="UniProtKB">
        <authorList>
            <person name="Bienvenut W.V."/>
        </authorList>
    </citation>
    <scope>PROTEIN SEQUENCE OF 330-339; 386-402; 452-472; 482-488; 526-534; 537-545; 549-556; 618-626; 634-641 AND 650-667</scope>
    <scope>IDENTIFICATION BY MASS SPECTROMETRY</scope>
</reference>
<reference key="3">
    <citation type="journal article" date="2013" name="Mitochondrion">
        <title>Mitochondrial SIRT4-type proteins in Caenorhabditis elegans and mammals interact with pyruvate carboxylase and other acetylated biotin-dependent carboxylases.</title>
        <authorList>
            <person name="Wirth M."/>
            <person name="Karaca S."/>
            <person name="Wenzel D."/>
            <person name="Ho L."/>
            <person name="Tishkoff D."/>
            <person name="Lombard D.B."/>
            <person name="Verdin E."/>
            <person name="Urlaub H."/>
            <person name="Jedrusik-Bode M."/>
            <person name="Fischle W."/>
        </authorList>
    </citation>
    <scope>INTERACTION WITH SIR-2.2 AND SIR-2.3</scope>
    <scope>IDENTIFICATION BY MASS SPECTROMETRY</scope>
</reference>
<keyword id="KW-0067">ATP-binding</keyword>
<keyword id="KW-0092">Biotin</keyword>
<keyword id="KW-0903">Direct protein sequencing</keyword>
<keyword id="KW-0436">Ligase</keyword>
<keyword id="KW-0442">Lipid degradation</keyword>
<keyword id="KW-0443">Lipid metabolism</keyword>
<keyword id="KW-0460">Magnesium</keyword>
<keyword id="KW-0464">Manganese</keyword>
<keyword id="KW-0479">Metal-binding</keyword>
<keyword id="KW-0496">Mitochondrion</keyword>
<keyword id="KW-0547">Nucleotide-binding</keyword>
<keyword id="KW-1185">Reference proteome</keyword>
<keyword id="KW-0809">Transit peptide</keyword>
<comment type="function">
    <text evidence="2 3 4">This is one of the 2 subunits of the biotin-dependent propionyl-CoA carboxylase (PCC), a mitochondrial enzyme involved in the catabolism of odd chain fatty acids, branched-chain amino acids isoleucine, threonine, methionine, and valine and other metabolites. Propionyl-CoA carboxylase catalyzes the carboxylation of propionyl-CoA/propanoyl-CoA to D-methylmalonyl-CoA/(S)-methylmalonyl-CoA (By similarity). Within the holoenzyme, the alpha subunit catalyzes the ATP-dependent carboxylation of the biotin carried by the biotin carboxyl carrier (BCC) domain, while the beta subunit then transfers the carboxyl group from carboxylated biotin to propionyl-CoA (By similarity). Propionyl-CoA carboxylase also significantly acts on butyryl-CoA/butanoyl-CoA, which is converted to ethylmalonyl-CoA/(2S)-ethylmalonyl-CoA (By similarity). Other alternative minor substrates include (2E)-butenoyl-CoA/crotonoyl-CoA (By similarity).</text>
</comment>
<comment type="catalytic activity">
    <reaction evidence="2">
        <text>propanoyl-CoA + hydrogencarbonate + ATP = (S)-methylmalonyl-CoA + ADP + phosphate + H(+)</text>
        <dbReference type="Rhea" id="RHEA:23720"/>
        <dbReference type="ChEBI" id="CHEBI:15378"/>
        <dbReference type="ChEBI" id="CHEBI:17544"/>
        <dbReference type="ChEBI" id="CHEBI:30616"/>
        <dbReference type="ChEBI" id="CHEBI:43474"/>
        <dbReference type="ChEBI" id="CHEBI:57327"/>
        <dbReference type="ChEBI" id="CHEBI:57392"/>
        <dbReference type="ChEBI" id="CHEBI:456216"/>
        <dbReference type="EC" id="6.4.1.3"/>
    </reaction>
    <physiologicalReaction direction="left-to-right" evidence="2">
        <dbReference type="Rhea" id="RHEA:23721"/>
    </physiologicalReaction>
</comment>
<comment type="catalytic activity">
    <reaction evidence="3">
        <text>butanoyl-CoA + hydrogencarbonate + ATP = (2S)-ethylmalonyl-CoA + ADP + phosphate + H(+)</text>
        <dbReference type="Rhea" id="RHEA:59520"/>
        <dbReference type="ChEBI" id="CHEBI:15378"/>
        <dbReference type="ChEBI" id="CHEBI:17544"/>
        <dbReference type="ChEBI" id="CHEBI:30616"/>
        <dbReference type="ChEBI" id="CHEBI:43474"/>
        <dbReference type="ChEBI" id="CHEBI:57371"/>
        <dbReference type="ChEBI" id="CHEBI:60909"/>
        <dbReference type="ChEBI" id="CHEBI:456216"/>
    </reaction>
    <physiologicalReaction direction="left-to-right" evidence="3">
        <dbReference type="Rhea" id="RHEA:59521"/>
    </physiologicalReaction>
</comment>
<comment type="cofactor">
    <cofactor evidence="8">
        <name>biotin</name>
        <dbReference type="ChEBI" id="CHEBI:57586"/>
    </cofactor>
</comment>
<comment type="cofactor">
    <cofactor evidence="6 7">
        <name>Mg(2+)</name>
        <dbReference type="ChEBI" id="CHEBI:18420"/>
    </cofactor>
    <cofactor evidence="6 7">
        <name>Mn(2+)</name>
        <dbReference type="ChEBI" id="CHEBI:29035"/>
    </cofactor>
    <text evidence="6 7">Binds 2 magnesium or manganese ions per subunit.</text>
</comment>
<comment type="pathway">
    <text evidence="2">Metabolic intermediate metabolism; propanoyl-CoA degradation; succinyl-CoA from propanoyl-CoA: step 1/3.</text>
</comment>
<comment type="subunit">
    <text evidence="2 9">The holoenzyme is a dodecamer composed of 6 alpha subunits and 6 beta subunits (By similarity). Interacts with sir-2.2 and sir-2.3 (PubMed:23438705).</text>
</comment>
<comment type="subcellular location">
    <subcellularLocation>
        <location evidence="2">Mitochondrion matrix</location>
    </subcellularLocation>
</comment>
<comment type="domain">
    <text evidence="4">Consists of an N-terminal biotin carboxylation/carboxylase (BC) domain that catalyzes the transient carboxylation of the biotin covalently attached to the C-terminal biotinyl-binding/biotin carboxyl carrier (BCC) domain.</text>
</comment>
<comment type="PTM">
    <text evidence="2">The biotin cofactor is covalently attached to the C-terminal biotinyl-binding domain and is required for the catalytic activity.</text>
</comment>
<proteinExistence type="evidence at protein level"/>
<evidence type="ECO:0000250" key="1"/>
<evidence type="ECO:0000250" key="2">
    <source>
        <dbReference type="UniProtKB" id="P05165"/>
    </source>
</evidence>
<evidence type="ECO:0000250" key="3">
    <source>
        <dbReference type="UniProtKB" id="P0DTA4"/>
    </source>
</evidence>
<evidence type="ECO:0000250" key="4">
    <source>
        <dbReference type="UniProtKB" id="Q5LUF3"/>
    </source>
</evidence>
<evidence type="ECO:0000255" key="5"/>
<evidence type="ECO:0000255" key="6">
    <source>
        <dbReference type="PROSITE-ProRule" id="PRU00409"/>
    </source>
</evidence>
<evidence type="ECO:0000255" key="7">
    <source>
        <dbReference type="PROSITE-ProRule" id="PRU00969"/>
    </source>
</evidence>
<evidence type="ECO:0000255" key="8">
    <source>
        <dbReference type="PROSITE-ProRule" id="PRU01066"/>
    </source>
</evidence>
<evidence type="ECO:0000269" key="9">
    <source>
    </source>
</evidence>
<evidence type="ECO:0000305" key="10">
    <source>
    </source>
</evidence>
<protein>
    <recommendedName>
        <fullName evidence="10">Propionyl-CoA carboxylase alpha chain, mitochondrial</fullName>
        <shortName>PCCase subunit alpha</shortName>
        <ecNumber evidence="2">6.4.1.3</ecNumber>
    </recommendedName>
    <alternativeName>
        <fullName>Propanoyl-CoA:carbon dioxide ligase subunit alpha</fullName>
    </alternativeName>
</protein>
<organism>
    <name type="scientific">Caenorhabditis elegans</name>
    <dbReference type="NCBI Taxonomy" id="6239"/>
    <lineage>
        <taxon>Eukaryota</taxon>
        <taxon>Metazoa</taxon>
        <taxon>Ecdysozoa</taxon>
        <taxon>Nematoda</taxon>
        <taxon>Chromadorea</taxon>
        <taxon>Rhabditida</taxon>
        <taxon>Rhabditina</taxon>
        <taxon>Rhabditomorpha</taxon>
        <taxon>Rhabditoidea</taxon>
        <taxon>Rhabditidae</taxon>
        <taxon>Peloderinae</taxon>
        <taxon>Caenorhabditis</taxon>
    </lineage>
</organism>
<name>PCCA_CAEEL</name>